<proteinExistence type="inferred from homology"/>
<reference key="1">
    <citation type="journal article" date="2010" name="J. Bacteriol.">
        <title>Complete genome sequence of the aerobic facultative methanotroph Methylocella silvestris BL2.</title>
        <authorList>
            <person name="Chen Y."/>
            <person name="Crombie A."/>
            <person name="Rahman M.T."/>
            <person name="Dedysh S.N."/>
            <person name="Liesack W."/>
            <person name="Stott M.B."/>
            <person name="Alam M."/>
            <person name="Theisen A.R."/>
            <person name="Murrell J.C."/>
            <person name="Dunfield P.F."/>
        </authorList>
    </citation>
    <scope>NUCLEOTIDE SEQUENCE [LARGE SCALE GENOMIC DNA]</scope>
    <source>
        <strain>DSM 15510 / CIP 108128 / LMG 27833 / NCIMB 13906 / BL2</strain>
    </source>
</reference>
<organism>
    <name type="scientific">Methylocella silvestris (strain DSM 15510 / CIP 108128 / LMG 27833 / NCIMB 13906 / BL2)</name>
    <dbReference type="NCBI Taxonomy" id="395965"/>
    <lineage>
        <taxon>Bacteria</taxon>
        <taxon>Pseudomonadati</taxon>
        <taxon>Pseudomonadota</taxon>
        <taxon>Alphaproteobacteria</taxon>
        <taxon>Hyphomicrobiales</taxon>
        <taxon>Beijerinckiaceae</taxon>
        <taxon>Methylocella</taxon>
    </lineage>
</organism>
<gene>
    <name evidence="1" type="primary">secB</name>
    <name type="ordered locus">Msil_0314</name>
</gene>
<protein>
    <recommendedName>
        <fullName evidence="1">Protein-export protein SecB</fullName>
    </recommendedName>
</protein>
<accession>B8EQM2</accession>
<evidence type="ECO:0000255" key="1">
    <source>
        <dbReference type="HAMAP-Rule" id="MF_00821"/>
    </source>
</evidence>
<feature type="chain" id="PRO_1000148705" description="Protein-export protein SecB">
    <location>
        <begin position="1"/>
        <end position="161"/>
    </location>
</feature>
<name>SECB_METSB</name>
<comment type="function">
    <text evidence="1">One of the proteins required for the normal export of preproteins out of the cell cytoplasm. It is a molecular chaperone that binds to a subset of precursor proteins, maintaining them in a translocation-competent state. It also specifically binds to its receptor SecA.</text>
</comment>
<comment type="subunit">
    <text evidence="1">Homotetramer, a dimer of dimers. One homotetramer interacts with 1 SecA dimer.</text>
</comment>
<comment type="subcellular location">
    <subcellularLocation>
        <location evidence="1">Cytoplasm</location>
    </subcellularLocation>
</comment>
<comment type="similarity">
    <text evidence="1">Belongs to the SecB family.</text>
</comment>
<sequence>MANGNGTGAEVDAAPAINAMVQYTKDFSFENPNAPRSLGPQDKPPNIQIQVNVNAKQVAENDFEVNILLEGSAKTDADTLFKFELDYAGLFRLINIPQSDAHPVIMIECPRLLFPFARQIIADAVRSGGFPPLYIDPIDFAALYRQRMSQVAANEQAPTVA</sequence>
<dbReference type="EMBL" id="CP001280">
    <property type="protein sequence ID" value="ACK49293.1"/>
    <property type="molecule type" value="Genomic_DNA"/>
</dbReference>
<dbReference type="RefSeq" id="WP_012589363.1">
    <property type="nucleotide sequence ID" value="NC_011666.1"/>
</dbReference>
<dbReference type="SMR" id="B8EQM2"/>
<dbReference type="STRING" id="395965.Msil_0314"/>
<dbReference type="KEGG" id="msl:Msil_0314"/>
<dbReference type="eggNOG" id="COG1952">
    <property type="taxonomic scope" value="Bacteria"/>
</dbReference>
<dbReference type="HOGENOM" id="CLU_111574_0_0_5"/>
<dbReference type="OrthoDB" id="9795145at2"/>
<dbReference type="Proteomes" id="UP000002257">
    <property type="component" value="Chromosome"/>
</dbReference>
<dbReference type="GO" id="GO:0005737">
    <property type="term" value="C:cytoplasm"/>
    <property type="evidence" value="ECO:0007669"/>
    <property type="project" value="UniProtKB-SubCell"/>
</dbReference>
<dbReference type="GO" id="GO:0051082">
    <property type="term" value="F:unfolded protein binding"/>
    <property type="evidence" value="ECO:0007669"/>
    <property type="project" value="InterPro"/>
</dbReference>
<dbReference type="GO" id="GO:0006457">
    <property type="term" value="P:protein folding"/>
    <property type="evidence" value="ECO:0007669"/>
    <property type="project" value="UniProtKB-UniRule"/>
</dbReference>
<dbReference type="GO" id="GO:0051262">
    <property type="term" value="P:protein tetramerization"/>
    <property type="evidence" value="ECO:0007669"/>
    <property type="project" value="InterPro"/>
</dbReference>
<dbReference type="GO" id="GO:0015031">
    <property type="term" value="P:protein transport"/>
    <property type="evidence" value="ECO:0007669"/>
    <property type="project" value="UniProtKB-UniRule"/>
</dbReference>
<dbReference type="Gene3D" id="3.10.420.10">
    <property type="entry name" value="SecB-like"/>
    <property type="match status" value="1"/>
</dbReference>
<dbReference type="HAMAP" id="MF_00821">
    <property type="entry name" value="SecB"/>
    <property type="match status" value="1"/>
</dbReference>
<dbReference type="InterPro" id="IPR003708">
    <property type="entry name" value="SecB"/>
</dbReference>
<dbReference type="InterPro" id="IPR035958">
    <property type="entry name" value="SecB-like_sf"/>
</dbReference>
<dbReference type="NCBIfam" id="NF004392">
    <property type="entry name" value="PRK05751.1-3"/>
    <property type="match status" value="1"/>
</dbReference>
<dbReference type="NCBIfam" id="TIGR00809">
    <property type="entry name" value="secB"/>
    <property type="match status" value="1"/>
</dbReference>
<dbReference type="PANTHER" id="PTHR36918">
    <property type="match status" value="1"/>
</dbReference>
<dbReference type="PANTHER" id="PTHR36918:SF1">
    <property type="entry name" value="PROTEIN-EXPORT PROTEIN SECB"/>
    <property type="match status" value="1"/>
</dbReference>
<dbReference type="Pfam" id="PF02556">
    <property type="entry name" value="SecB"/>
    <property type="match status" value="1"/>
</dbReference>
<dbReference type="PRINTS" id="PR01594">
    <property type="entry name" value="SECBCHAPRONE"/>
</dbReference>
<dbReference type="SUPFAM" id="SSF54611">
    <property type="entry name" value="SecB-like"/>
    <property type="match status" value="1"/>
</dbReference>
<keyword id="KW-0143">Chaperone</keyword>
<keyword id="KW-0963">Cytoplasm</keyword>
<keyword id="KW-0653">Protein transport</keyword>
<keyword id="KW-1185">Reference proteome</keyword>
<keyword id="KW-0811">Translocation</keyword>
<keyword id="KW-0813">Transport</keyword>